<feature type="chain" id="PRO_0000327112" description="Protoheme IX farnesyltransferase">
    <location>
        <begin position="1"/>
        <end position="333"/>
    </location>
</feature>
<feature type="transmembrane region" description="Helical" evidence="1">
    <location>
        <begin position="38"/>
        <end position="58"/>
    </location>
</feature>
<feature type="transmembrane region" description="Helical" evidence="1">
    <location>
        <begin position="63"/>
        <end position="83"/>
    </location>
</feature>
<feature type="transmembrane region" description="Helical" evidence="1">
    <location>
        <begin position="109"/>
        <end position="129"/>
    </location>
</feature>
<feature type="transmembrane region" description="Helical" evidence="1">
    <location>
        <begin position="132"/>
        <end position="152"/>
    </location>
</feature>
<feature type="transmembrane region" description="Helical" evidence="1">
    <location>
        <begin position="160"/>
        <end position="180"/>
    </location>
</feature>
<feature type="transmembrane region" description="Helical" evidence="1">
    <location>
        <begin position="188"/>
        <end position="208"/>
    </location>
</feature>
<feature type="transmembrane region" description="Helical" evidence="1">
    <location>
        <begin position="245"/>
        <end position="265"/>
    </location>
</feature>
<feature type="transmembrane region" description="Helical" evidence="1">
    <location>
        <begin position="286"/>
        <end position="306"/>
    </location>
</feature>
<feature type="region of interest" description="Disordered" evidence="2">
    <location>
        <begin position="1"/>
        <end position="21"/>
    </location>
</feature>
<feature type="compositionally biased region" description="Low complexity" evidence="2">
    <location>
        <begin position="1"/>
        <end position="13"/>
    </location>
</feature>
<accession>Q7VDD5</accession>
<proteinExistence type="inferred from homology"/>
<evidence type="ECO:0000255" key="1">
    <source>
        <dbReference type="HAMAP-Rule" id="MF_00154"/>
    </source>
</evidence>
<evidence type="ECO:0000256" key="2">
    <source>
        <dbReference type="SAM" id="MobiDB-lite"/>
    </source>
</evidence>
<dbReference type="EC" id="2.5.1.141" evidence="1"/>
<dbReference type="EMBL" id="AE017126">
    <property type="protein sequence ID" value="AAP99490.1"/>
    <property type="molecule type" value="Genomic_DNA"/>
</dbReference>
<dbReference type="RefSeq" id="NP_874838.1">
    <property type="nucleotide sequence ID" value="NC_005042.1"/>
</dbReference>
<dbReference type="RefSeq" id="WP_011124599.1">
    <property type="nucleotide sequence ID" value="NC_005042.1"/>
</dbReference>
<dbReference type="SMR" id="Q7VDD5"/>
<dbReference type="STRING" id="167539.Pro_0444"/>
<dbReference type="EnsemblBacteria" id="AAP99490">
    <property type="protein sequence ID" value="AAP99490"/>
    <property type="gene ID" value="Pro_0444"/>
</dbReference>
<dbReference type="KEGG" id="pma:Pro_0444"/>
<dbReference type="PATRIC" id="fig|167539.5.peg.455"/>
<dbReference type="eggNOG" id="COG0109">
    <property type="taxonomic scope" value="Bacteria"/>
</dbReference>
<dbReference type="HOGENOM" id="CLU_029631_0_2_3"/>
<dbReference type="OrthoDB" id="9814417at2"/>
<dbReference type="UniPathway" id="UPA00834">
    <property type="reaction ID" value="UER00712"/>
</dbReference>
<dbReference type="Proteomes" id="UP000001420">
    <property type="component" value="Chromosome"/>
</dbReference>
<dbReference type="GO" id="GO:0005886">
    <property type="term" value="C:plasma membrane"/>
    <property type="evidence" value="ECO:0007669"/>
    <property type="project" value="UniProtKB-SubCell"/>
</dbReference>
<dbReference type="GO" id="GO:0008495">
    <property type="term" value="F:protoheme IX farnesyltransferase activity"/>
    <property type="evidence" value="ECO:0007669"/>
    <property type="project" value="UniProtKB-UniRule"/>
</dbReference>
<dbReference type="GO" id="GO:0048034">
    <property type="term" value="P:heme O biosynthetic process"/>
    <property type="evidence" value="ECO:0007669"/>
    <property type="project" value="UniProtKB-UniRule"/>
</dbReference>
<dbReference type="CDD" id="cd13957">
    <property type="entry name" value="PT_UbiA_Cox10"/>
    <property type="match status" value="1"/>
</dbReference>
<dbReference type="Gene3D" id="1.10.357.140">
    <property type="entry name" value="UbiA prenyltransferase"/>
    <property type="match status" value="1"/>
</dbReference>
<dbReference type="HAMAP" id="MF_00154">
    <property type="entry name" value="CyoE_CtaB"/>
    <property type="match status" value="1"/>
</dbReference>
<dbReference type="InterPro" id="IPR006369">
    <property type="entry name" value="Protohaem_IX_farnesylTrfase"/>
</dbReference>
<dbReference type="InterPro" id="IPR000537">
    <property type="entry name" value="UbiA_prenyltransferase"/>
</dbReference>
<dbReference type="InterPro" id="IPR030470">
    <property type="entry name" value="UbiA_prenylTrfase_CS"/>
</dbReference>
<dbReference type="InterPro" id="IPR044878">
    <property type="entry name" value="UbiA_sf"/>
</dbReference>
<dbReference type="NCBIfam" id="TIGR01473">
    <property type="entry name" value="cyoE_ctaB"/>
    <property type="match status" value="1"/>
</dbReference>
<dbReference type="NCBIfam" id="NF003349">
    <property type="entry name" value="PRK04375.1-2"/>
    <property type="match status" value="1"/>
</dbReference>
<dbReference type="PANTHER" id="PTHR43448:SF7">
    <property type="entry name" value="4-HYDROXYBENZOATE SOLANESYLTRANSFERASE"/>
    <property type="match status" value="1"/>
</dbReference>
<dbReference type="PANTHER" id="PTHR43448">
    <property type="entry name" value="PROTOHEME IX FARNESYLTRANSFERASE, MITOCHONDRIAL"/>
    <property type="match status" value="1"/>
</dbReference>
<dbReference type="Pfam" id="PF01040">
    <property type="entry name" value="UbiA"/>
    <property type="match status" value="1"/>
</dbReference>
<dbReference type="PROSITE" id="PS00943">
    <property type="entry name" value="UBIA"/>
    <property type="match status" value="1"/>
</dbReference>
<protein>
    <recommendedName>
        <fullName evidence="1">Protoheme IX farnesyltransferase</fullName>
        <ecNumber evidence="1">2.5.1.141</ecNumber>
    </recommendedName>
    <alternativeName>
        <fullName evidence="1">Heme B farnesyltransferase</fullName>
    </alternativeName>
    <alternativeName>
        <fullName evidence="1">Heme O synthase</fullName>
    </alternativeName>
</protein>
<gene>
    <name evidence="1" type="primary">ctaB</name>
    <name type="ordered locus">Pro_0444</name>
</gene>
<sequence length="333" mass="35185">MVSSTSQIISTSPSRDDVVPSRKKVTLPPWLEVAKPRLIPLLLATTLGGMALSEGWPLPSPRLACTLGGGALAAAAAGALNCLWEQDLDGRMKRTSSRALPAGKLSPSAVFTGAISCTLAAAALLVSGVNCLAAGLSLLGLCSYVLLYTAFLKPRTSQNIVIGGVAGAIPPLVGAAAATGHIGLSGWWLFALVMVWTPAHFWALAILLKDDYRSVGIPMLPVVKGSVFTAKAIAQYGWATVLLSCFGVFALPEGGALYGILLVPFNVRLLQMVRRLAADPEDLQRAKGLFRWSILYMFGICLLLVVSRSTLADQFHNQAIYLFTNMGSVFSIA</sequence>
<reference key="1">
    <citation type="journal article" date="2003" name="Proc. Natl. Acad. Sci. U.S.A.">
        <title>Genome sequence of the cyanobacterium Prochlorococcus marinus SS120, a nearly minimal oxyphototrophic genome.</title>
        <authorList>
            <person name="Dufresne A."/>
            <person name="Salanoubat M."/>
            <person name="Partensky F."/>
            <person name="Artiguenave F."/>
            <person name="Axmann I.M."/>
            <person name="Barbe V."/>
            <person name="Duprat S."/>
            <person name="Galperin M.Y."/>
            <person name="Koonin E.V."/>
            <person name="Le Gall F."/>
            <person name="Makarova K.S."/>
            <person name="Ostrowski M."/>
            <person name="Oztas S."/>
            <person name="Robert C."/>
            <person name="Rogozin I.B."/>
            <person name="Scanlan D.J."/>
            <person name="Tandeau de Marsac N."/>
            <person name="Weissenbach J."/>
            <person name="Wincker P."/>
            <person name="Wolf Y.I."/>
            <person name="Hess W.R."/>
        </authorList>
    </citation>
    <scope>NUCLEOTIDE SEQUENCE [LARGE SCALE GENOMIC DNA]</scope>
    <source>
        <strain>SARG / CCMP1375 / SS120</strain>
    </source>
</reference>
<comment type="function">
    <text evidence="1">Converts heme B (protoheme IX) to heme O by substitution of the vinyl group on carbon 2 of heme B porphyrin ring with a hydroxyethyl farnesyl side group.</text>
</comment>
<comment type="catalytic activity">
    <reaction evidence="1">
        <text>heme b + (2E,6E)-farnesyl diphosphate + H2O = Fe(II)-heme o + diphosphate</text>
        <dbReference type="Rhea" id="RHEA:28070"/>
        <dbReference type="ChEBI" id="CHEBI:15377"/>
        <dbReference type="ChEBI" id="CHEBI:33019"/>
        <dbReference type="ChEBI" id="CHEBI:60344"/>
        <dbReference type="ChEBI" id="CHEBI:60530"/>
        <dbReference type="ChEBI" id="CHEBI:175763"/>
        <dbReference type="EC" id="2.5.1.141"/>
    </reaction>
</comment>
<comment type="pathway">
    <text evidence="1">Porphyrin-containing compound metabolism; heme O biosynthesis; heme O from protoheme: step 1/1.</text>
</comment>
<comment type="subcellular location">
    <subcellularLocation>
        <location evidence="1">Cell inner membrane</location>
        <topology evidence="1">Multi-pass membrane protein</topology>
    </subcellularLocation>
</comment>
<comment type="miscellaneous">
    <text evidence="1">Carbon 2 of the heme B porphyrin ring is defined according to the Fischer nomenclature.</text>
</comment>
<comment type="similarity">
    <text evidence="1">Belongs to the UbiA prenyltransferase family. Protoheme IX farnesyltransferase subfamily.</text>
</comment>
<organism>
    <name type="scientific">Prochlorococcus marinus (strain SARG / CCMP1375 / SS120)</name>
    <dbReference type="NCBI Taxonomy" id="167539"/>
    <lineage>
        <taxon>Bacteria</taxon>
        <taxon>Bacillati</taxon>
        <taxon>Cyanobacteriota</taxon>
        <taxon>Cyanophyceae</taxon>
        <taxon>Synechococcales</taxon>
        <taxon>Prochlorococcaceae</taxon>
        <taxon>Prochlorococcus</taxon>
    </lineage>
</organism>
<name>COXX_PROMA</name>
<keyword id="KW-0997">Cell inner membrane</keyword>
<keyword id="KW-1003">Cell membrane</keyword>
<keyword id="KW-0350">Heme biosynthesis</keyword>
<keyword id="KW-0472">Membrane</keyword>
<keyword id="KW-1185">Reference proteome</keyword>
<keyword id="KW-0808">Transferase</keyword>
<keyword id="KW-0812">Transmembrane</keyword>
<keyword id="KW-1133">Transmembrane helix</keyword>